<organism>
    <name type="scientific">Silene latifolia</name>
    <name type="common">White campion</name>
    <name type="synonym">Bladder campion</name>
    <dbReference type="NCBI Taxonomy" id="37657"/>
    <lineage>
        <taxon>Eukaryota</taxon>
        <taxon>Viridiplantae</taxon>
        <taxon>Streptophyta</taxon>
        <taxon>Embryophyta</taxon>
        <taxon>Tracheophyta</taxon>
        <taxon>Spermatophyta</taxon>
        <taxon>Magnoliopsida</taxon>
        <taxon>eudicotyledons</taxon>
        <taxon>Gunneridae</taxon>
        <taxon>Pentapetalae</taxon>
        <taxon>Caryophyllales</taxon>
        <taxon>Caryophyllaceae</taxon>
        <taxon>Sileneae</taxon>
        <taxon>Silene</taxon>
        <taxon>Silene subgen. Behenantha</taxon>
        <taxon>Silene sect. Melandrium</taxon>
    </lineage>
</organism>
<protein>
    <recommendedName>
        <fullName evidence="1">Photosystem II reaction center protein I</fullName>
        <shortName evidence="1">PSII-I</shortName>
    </recommendedName>
    <alternativeName>
        <fullName evidence="1">PSII 4.8 kDa protein</fullName>
    </alternativeName>
</protein>
<sequence length="36" mass="4154">MLTLKLFVYTVVIFFVSLFIFGFLSNDPGRNPGRED</sequence>
<geneLocation type="chloroplast"/>
<name>PSBI_SILLA</name>
<feature type="chain" id="PRO_0000219654" description="Photosystem II reaction center protein I">
    <location>
        <begin position="1"/>
        <end position="36"/>
    </location>
</feature>
<feature type="transmembrane region" description="Helical" evidence="1">
    <location>
        <begin position="4"/>
        <end position="24"/>
    </location>
</feature>
<evidence type="ECO:0000255" key="1">
    <source>
        <dbReference type="HAMAP-Rule" id="MF_01316"/>
    </source>
</evidence>
<comment type="function">
    <text evidence="1">One of the components of the core complex of photosystem II (PSII), required for its stability and/or assembly. PSII is a light-driven water:plastoquinone oxidoreductase that uses light energy to abstract electrons from H(2)O, generating O(2) and a proton gradient subsequently used for ATP formation. It consists of a core antenna complex that captures photons, and an electron transfer chain that converts photonic excitation into a charge separation.</text>
</comment>
<comment type="subunit">
    <text evidence="1">PSII is composed of 1 copy each of membrane proteins PsbA, PsbB, PsbC, PsbD, PsbE, PsbF, PsbH, PsbI, PsbJ, PsbK, PsbL, PsbM, PsbT, PsbX, PsbY, PsbZ, Psb30/Ycf12, at least 3 peripheral proteins of the oxygen-evolving complex and a large number of cofactors. It forms dimeric complexes.</text>
</comment>
<comment type="subcellular location">
    <subcellularLocation>
        <location evidence="1">Plastid</location>
        <location evidence="1">Chloroplast thylakoid membrane</location>
        <topology evidence="1">Single-pass membrane protein</topology>
    </subcellularLocation>
</comment>
<comment type="similarity">
    <text evidence="1">Belongs to the PsbI family.</text>
</comment>
<gene>
    <name evidence="1" type="primary">psbI</name>
</gene>
<proteinExistence type="inferred from homology"/>
<dbReference type="EMBL" id="AB189069">
    <property type="protein sequence ID" value="BAD93465.1"/>
    <property type="molecule type" value="Genomic_DNA"/>
</dbReference>
<dbReference type="RefSeq" id="YP_005089561.1">
    <property type="nucleotide sequence ID" value="NC_016730.1"/>
</dbReference>
<dbReference type="SMR" id="Q589B2"/>
<dbReference type="GeneID" id="11541154"/>
<dbReference type="GO" id="GO:0009535">
    <property type="term" value="C:chloroplast thylakoid membrane"/>
    <property type="evidence" value="ECO:0007669"/>
    <property type="project" value="UniProtKB-SubCell"/>
</dbReference>
<dbReference type="GO" id="GO:0009539">
    <property type="term" value="C:photosystem II reaction center"/>
    <property type="evidence" value="ECO:0007669"/>
    <property type="project" value="InterPro"/>
</dbReference>
<dbReference type="GO" id="GO:0015979">
    <property type="term" value="P:photosynthesis"/>
    <property type="evidence" value="ECO:0007669"/>
    <property type="project" value="UniProtKB-UniRule"/>
</dbReference>
<dbReference type="HAMAP" id="MF_01316">
    <property type="entry name" value="PSII_PsbI"/>
    <property type="match status" value="1"/>
</dbReference>
<dbReference type="InterPro" id="IPR003686">
    <property type="entry name" value="PSII_PsbI"/>
</dbReference>
<dbReference type="InterPro" id="IPR037271">
    <property type="entry name" value="PSII_PsbI_sf"/>
</dbReference>
<dbReference type="NCBIfam" id="NF002735">
    <property type="entry name" value="PRK02655.1"/>
    <property type="match status" value="1"/>
</dbReference>
<dbReference type="PANTHER" id="PTHR35772">
    <property type="entry name" value="PHOTOSYSTEM II REACTION CENTER PROTEIN I"/>
    <property type="match status" value="1"/>
</dbReference>
<dbReference type="PANTHER" id="PTHR35772:SF1">
    <property type="entry name" value="PHOTOSYSTEM II REACTION CENTER PROTEIN I"/>
    <property type="match status" value="1"/>
</dbReference>
<dbReference type="Pfam" id="PF02532">
    <property type="entry name" value="PsbI"/>
    <property type="match status" value="1"/>
</dbReference>
<dbReference type="SUPFAM" id="SSF161041">
    <property type="entry name" value="Photosystem II reaction center protein I, PsbI"/>
    <property type="match status" value="1"/>
</dbReference>
<keyword id="KW-0150">Chloroplast</keyword>
<keyword id="KW-0472">Membrane</keyword>
<keyword id="KW-0602">Photosynthesis</keyword>
<keyword id="KW-0604">Photosystem II</keyword>
<keyword id="KW-0934">Plastid</keyword>
<keyword id="KW-0674">Reaction center</keyword>
<keyword id="KW-0793">Thylakoid</keyword>
<keyword id="KW-0812">Transmembrane</keyword>
<keyword id="KW-1133">Transmembrane helix</keyword>
<accession>Q589B2</accession>
<reference key="1">
    <citation type="submission" date="2004-08" db="EMBL/GenBank/DDBJ databases">
        <title>A partial chloroplast genome of Silene latifolia.</title>
        <authorList>
            <person name="Kejnovsky E."/>
            <person name="Kubat Z."/>
            <person name="Hobza R."/>
            <person name="Lengerova M."/>
            <person name="Sato S."/>
            <person name="Tabata S."/>
            <person name="Fukui K."/>
            <person name="Matsunaga S."/>
            <person name="Vyskot B."/>
        </authorList>
    </citation>
    <scope>NUCLEOTIDE SEQUENCE [GENOMIC DNA]</scope>
</reference>